<protein>
    <recommendedName>
        <fullName>Short-chain dehydrogenase/reductase ARMGADRAFT_1018421</fullName>
        <ecNumber>1.1.1.-</ecNumber>
    </recommendedName>
    <alternativeName>
        <fullName>Melleolide biosynthesis cluster protein ARMGADRAFT_1018421</fullName>
    </alternativeName>
</protein>
<organism>
    <name type="scientific">Armillaria gallica</name>
    <name type="common">Bulbous honey fungus</name>
    <name type="synonym">Armillaria bulbosa</name>
    <dbReference type="NCBI Taxonomy" id="47427"/>
    <lineage>
        <taxon>Eukaryota</taxon>
        <taxon>Fungi</taxon>
        <taxon>Dikarya</taxon>
        <taxon>Basidiomycota</taxon>
        <taxon>Agaricomycotina</taxon>
        <taxon>Agaricomycetes</taxon>
        <taxon>Agaricomycetidae</taxon>
        <taxon>Agaricales</taxon>
        <taxon>Marasmiineae</taxon>
        <taxon>Physalacriaceae</taxon>
        <taxon>Armillaria</taxon>
    </lineage>
</organism>
<feature type="chain" id="PRO_0000449406" description="Short-chain dehydrogenase/reductase ARMGADRAFT_1018421">
    <location>
        <begin position="1"/>
        <end position="261"/>
    </location>
</feature>
<feature type="active site" description="Proton acceptor" evidence="4">
    <location>
        <position position="161"/>
    </location>
</feature>
<feature type="active site" description="Lowers pKa of active site Tyr" evidence="3">
    <location>
        <position position="165"/>
    </location>
</feature>
<feature type="binding site" evidence="2">
    <location>
        <position position="21"/>
    </location>
    <ligand>
        <name>NADP(+)</name>
        <dbReference type="ChEBI" id="CHEBI:58349"/>
    </ligand>
</feature>
<feature type="binding site" evidence="2">
    <location>
        <position position="68"/>
    </location>
    <ligand>
        <name>NADP(+)</name>
        <dbReference type="ChEBI" id="CHEBI:58349"/>
    </ligand>
</feature>
<feature type="binding site" evidence="3">
    <location>
        <position position="95"/>
    </location>
    <ligand>
        <name>NADP(+)</name>
        <dbReference type="ChEBI" id="CHEBI:58349"/>
    </ligand>
</feature>
<feature type="binding site" evidence="2">
    <location>
        <position position="128"/>
    </location>
    <ligand>
        <name>NADP(+)</name>
        <dbReference type="ChEBI" id="CHEBI:58349"/>
    </ligand>
</feature>
<feature type="binding site" evidence="3">
    <location>
        <position position="161"/>
    </location>
    <ligand>
        <name>NADP(+)</name>
        <dbReference type="ChEBI" id="CHEBI:58349"/>
    </ligand>
</feature>
<feature type="binding site" evidence="3">
    <location>
        <position position="165"/>
    </location>
    <ligand>
        <name>NADP(+)</name>
        <dbReference type="ChEBI" id="CHEBI:58349"/>
    </ligand>
</feature>
<feature type="binding site" evidence="3">
    <location>
        <position position="194"/>
    </location>
    <ligand>
        <name>NADP(+)</name>
        <dbReference type="ChEBI" id="CHEBI:58349"/>
    </ligand>
</feature>
<feature type="binding site" evidence="2">
    <location>
        <position position="196"/>
    </location>
    <ligand>
        <name>NADP(+)</name>
        <dbReference type="ChEBI" id="CHEBI:58349"/>
    </ligand>
</feature>
<reference key="1">
    <citation type="journal article" date="2017" name="Nat. Ecol. Evol.">
        <title>Genome expansion and lineage-specific genetic innovations in the forest pathogenic fungi Armillaria.</title>
        <authorList>
            <person name="Sipos G."/>
            <person name="Prasanna A.N."/>
            <person name="Walter M.C."/>
            <person name="O'Connor E."/>
            <person name="Balint B."/>
            <person name="Krizsan K."/>
            <person name="Kiss B."/>
            <person name="Hess J."/>
            <person name="Varga T."/>
            <person name="Slot J."/>
            <person name="Riley R."/>
            <person name="Boka B."/>
            <person name="Rigling D."/>
            <person name="Barry K."/>
            <person name="Lee J."/>
            <person name="Mihaltcheva S."/>
            <person name="LaButti K."/>
            <person name="Lipzen A."/>
            <person name="Waldron R."/>
            <person name="Moloney N.M."/>
            <person name="Sperisen C."/>
            <person name="Kredics L."/>
            <person name="Vagvoelgyi C."/>
            <person name="Patrignani A."/>
            <person name="Fitzpatrick D."/>
            <person name="Nagy I."/>
            <person name="Doyle S."/>
            <person name="Anderson J.B."/>
            <person name="Grigoriev I.V."/>
            <person name="Gueldener U."/>
            <person name="Muensterkoetter M."/>
            <person name="Nagy L.G."/>
        </authorList>
    </citation>
    <scope>NUCLEOTIDE SEQUENCE [LARGE SCALE GENOMIC DNA]</scope>
    <source>
        <strain>Ar21-2</strain>
    </source>
</reference>
<reference key="2">
    <citation type="journal article" date="2011" name="Bioorg. Med. Chem. Lett.">
        <title>In vitro cytotoxicity of melleolide antibiotics: structural and mechanistic aspects.</title>
        <authorList>
            <person name="Bohnert M."/>
            <person name="Miethbauer S."/>
            <person name="Dahse H.M."/>
            <person name="Ziemen J."/>
            <person name="Nett M."/>
            <person name="Hoffmeister D."/>
        </authorList>
    </citation>
    <scope>BIOTECHNOLOGY</scope>
</reference>
<reference key="3">
    <citation type="journal article" date="2011" name="J. Biol. Chem.">
        <title>Cloning and characterization of an Armillaria gallica cDNA encoding protoilludene synthase, which catalyzes the first committed step in the synthesis of antimicrobial melleolides.</title>
        <authorList>
            <person name="Engels B."/>
            <person name="Heinig U."/>
            <person name="Grothe T."/>
            <person name="Stadler M."/>
            <person name="Jennewein S."/>
        </authorList>
    </citation>
    <scope>FUNCTION</scope>
    <source>
        <strain>FU02472</strain>
    </source>
</reference>
<reference key="4">
    <citation type="journal article" date="2013" name="Evid. Based Complement Alternat. Med.">
        <title>Therapeutic and radiosensitizing effects of armillaridin on human esophageal cancer cells.</title>
        <authorList>
            <person name="Chi C.W."/>
            <person name="Chen C.C."/>
            <person name="Chen Y.J."/>
        </authorList>
    </citation>
    <scope>BIOTECHNOLOGY</scope>
</reference>
<reference key="5">
    <citation type="journal article" date="2015" name="Int. J. Med. Mushrooms">
        <title>Armillaridin, a honey medicinal mushroom, Armillaria mellea (higher basidiomycetes) component, inhibits differentiation and activation of human macrophages.</title>
        <authorList>
            <person name="Liu T.P."/>
            <person name="Chen C.C."/>
            <person name="Shiao P.Y."/>
            <person name="Shieh H.R."/>
            <person name="Chen Y.Y."/>
            <person name="Chen Y.J."/>
        </authorList>
    </citation>
    <scope>BIOTECHNOLOGY</scope>
</reference>
<reference key="6">
    <citation type="journal article" date="2016" name="J. Ethnopharmacol.">
        <title>Structure, cytotoxic activity and mechanism of protoilludane sesquiterpene aryl esters from the mycelium of Armillaria mellea.</title>
        <authorList>
            <person name="Li Z."/>
            <person name="Wang Y."/>
            <person name="Jiang B."/>
            <person name="Li W."/>
            <person name="Zheng L."/>
            <person name="Yang X."/>
            <person name="Bao Y."/>
            <person name="Sun L."/>
            <person name="Huang Y."/>
            <person name="Li Y."/>
        </authorList>
    </citation>
    <scope>BIOTECHNOLOGY</scope>
</reference>
<reference key="7">
    <citation type="journal article" date="2016" name="Tumor Biol.">
        <title>Armillaridin induces autophagy-associated cell death in human chronic myelogenous leukemia K562 cells.</title>
        <authorList>
            <person name="Chang W.H."/>
            <person name="Huang H.L."/>
            <person name="Huang W.P."/>
            <person name="Chen C.C."/>
            <person name="Chen Y.J."/>
        </authorList>
    </citation>
    <scope>BIOTECHNOLOGY</scope>
</reference>
<reference key="8">
    <citation type="journal article" date="2018" name="Curr. Biol.">
        <title>Armillaria.</title>
        <authorList>
            <person name="Sipos G."/>
            <person name="Anderson J.B."/>
            <person name="Nagy L.G."/>
        </authorList>
    </citation>
    <scope>MISCELLANEOUS</scope>
</reference>
<reference key="9">
    <citation type="journal article" date="2018" name="Proc. R. Soc. B">
        <title>Clonal evolution and genome stability in a 2500-year-old fungal individual.</title>
        <authorList>
            <person name="Anderson J.B."/>
            <person name="Bruhn J.N."/>
            <person name="Kasimer D."/>
            <person name="Wang H."/>
            <person name="Rodrigue N."/>
            <person name="Smith M.L."/>
        </authorList>
    </citation>
    <scope>MISCELLANEOUS</scope>
</reference>
<reference key="10">
    <citation type="journal article" date="2019" name="Am. J. Chin. Med.">
        <title>Induction of autophagic death of human hepatocellular carcinoma cells by armillaridin from Armillaria mellea.</title>
        <authorList>
            <person name="Leu Y.S."/>
            <person name="Chen Y.J."/>
            <person name="Chen C.C."/>
            <person name="Huang H.L."/>
        </authorList>
    </citation>
    <scope>BIOTECHNOLOGY</scope>
</reference>
<reference key="11">
    <citation type="journal article" date="2020" name="Plant Dis.">
        <title>Susceptibility of garden trees and shrubs to Armillaria root rot.</title>
        <authorList>
            <person name="Cromey M.G."/>
            <person name="Drakulic J."/>
            <person name="Beal E.J."/>
            <person name="Waghorn I.A.G."/>
            <person name="Perry J.N."/>
            <person name="Clover G.R.G."/>
        </authorList>
    </citation>
    <scope>MISCELLANEOUS</scope>
</reference>
<dbReference type="EC" id="1.1.1.-"/>
<dbReference type="EMBL" id="KZ293696">
    <property type="protein sequence ID" value="PBK84743.1"/>
    <property type="molecule type" value="Genomic_DNA"/>
</dbReference>
<dbReference type="SMR" id="A0A2H3D8Y2"/>
<dbReference type="FunCoup" id="A0A2H3D8Y2">
    <property type="interactions" value="24"/>
</dbReference>
<dbReference type="STRING" id="47427.A0A2H3D8Y2"/>
<dbReference type="InParanoid" id="A0A2H3D8Y2"/>
<dbReference type="OMA" id="HIVQITT"/>
<dbReference type="OrthoDB" id="498125at2759"/>
<dbReference type="Proteomes" id="UP000217790">
    <property type="component" value="Unassembled WGS sequence"/>
</dbReference>
<dbReference type="GO" id="GO:0016616">
    <property type="term" value="F:oxidoreductase activity, acting on the CH-OH group of donors, NAD or NADP as acceptor"/>
    <property type="evidence" value="ECO:0007669"/>
    <property type="project" value="TreeGrafter"/>
</dbReference>
<dbReference type="GO" id="GO:0048038">
    <property type="term" value="F:quinone binding"/>
    <property type="evidence" value="ECO:0007669"/>
    <property type="project" value="TreeGrafter"/>
</dbReference>
<dbReference type="GO" id="GO:0006633">
    <property type="term" value="P:fatty acid biosynthetic process"/>
    <property type="evidence" value="ECO:0007669"/>
    <property type="project" value="TreeGrafter"/>
</dbReference>
<dbReference type="FunFam" id="3.40.50.720:FF:000084">
    <property type="entry name" value="Short-chain dehydrogenase reductase"/>
    <property type="match status" value="1"/>
</dbReference>
<dbReference type="Gene3D" id="3.40.50.720">
    <property type="entry name" value="NAD(P)-binding Rossmann-like Domain"/>
    <property type="match status" value="1"/>
</dbReference>
<dbReference type="InterPro" id="IPR036291">
    <property type="entry name" value="NAD(P)-bd_dom_sf"/>
</dbReference>
<dbReference type="InterPro" id="IPR020904">
    <property type="entry name" value="Sc_DH/Rdtase_CS"/>
</dbReference>
<dbReference type="InterPro" id="IPR002347">
    <property type="entry name" value="SDR_fam"/>
</dbReference>
<dbReference type="PANTHER" id="PTHR42760:SF121">
    <property type="entry name" value="3-OXOACYL-(ACYL-CARRIER-PROTEIN) REDUCTASE"/>
    <property type="match status" value="1"/>
</dbReference>
<dbReference type="PANTHER" id="PTHR42760">
    <property type="entry name" value="SHORT-CHAIN DEHYDROGENASES/REDUCTASES FAMILY MEMBER"/>
    <property type="match status" value="1"/>
</dbReference>
<dbReference type="Pfam" id="PF13561">
    <property type="entry name" value="adh_short_C2"/>
    <property type="match status" value="1"/>
</dbReference>
<dbReference type="PRINTS" id="PR00081">
    <property type="entry name" value="GDHRDH"/>
</dbReference>
<dbReference type="PRINTS" id="PR00080">
    <property type="entry name" value="SDRFAMILY"/>
</dbReference>
<dbReference type="SUPFAM" id="SSF51735">
    <property type="entry name" value="NAD(P)-binding Rossmann-fold domains"/>
    <property type="match status" value="1"/>
</dbReference>
<dbReference type="PROSITE" id="PS00061">
    <property type="entry name" value="ADH_SHORT"/>
    <property type="match status" value="1"/>
</dbReference>
<gene>
    <name type="ORF">ARMGADRAFT_1018421</name>
</gene>
<comment type="function">
    <text evidence="1 5 14">Short-chain dehydrogenase/reductase, part of the gene cluster that mediates the biosynthesis of melleolides, a range of antifungal and phytotoxic polyketide derivatives composed of an orsellinic acid (OA) moiety esterified to various sesquiterpene alcohols (Probable). The first step in melleolides biosynthesis is performed by the delta(6)-protoilludene synthase PRO1 which catalyzes the cyclization of farnesyl diphosphate to protoilludene (PubMed:21148562). The orsellinic acid synthase armB produces OA by condensing acetyl-CoA with 3 malonyl-CoA units in a three-round chain elongation reaction folowed by a C2-C7 ring closure (By similarity). ArmB further catalyzes the trans-esterification of OA to the various sesquiterpene alcohols resulting from the hydroxylation of protoilludene (By similarity). The melleolides cluster also includes 5 cytochrome P450 monooxygenases, 4 NAD(+)-dependent oxidoreductases, one flavin-dependent oxidoreductase, and one O-methyltransferase (By similarity). The cytochrome P450 monooxygenases may be involved in protoilludene hydroxylation to elaborate melleolides with multiple alcohol groups, such as melleolide D, which carries alcohol functionalities at C-4, C-5, C-10, and C-13 (By similarity). The role of the NAD(+)-dependent enzymes remains unknown (By similarity). Numerous melleolides, including arnamial, show 5'-O-methylation of the aromatic moiety which may be catalyzed by the methyltransferase encoded in the cluster (By similarity). The flavin-dependent oxidoreductase might represent the dehydrogenase yielding the aldehyde in position 1 of arnamial and other melleolides (By similarity). Finally, several halogenase localized outside of the cluster, are able to catalyze the transfer of a single chlorine atom to the melleolide backbone, resulting in a 6'-chloromelleolide product (By similarity).</text>
</comment>
<comment type="pathway">
    <text evidence="14">Secondary metabolite biosynthesis.</text>
</comment>
<comment type="biotechnology">
    <text evidence="6 7 8 9 10 12">Melleolide sesquiterpene aryl esters are cytotoxic secondary products with anti-cancer potential (PubMed:21376582, PubMed:26952552). Armillaridin shows therapeutic and radiosensitizing effects on human esophageal cancer cells (PubMed:23864890). Armillaridin induces autophagy-associated cell death in human chronic myelogenous leukemia as well as of hepatocellular carcinoma cells (PubMed:27592257, PubMed:31488037). Armillaridin can also inhibit the differentiation and activation of human macrophages and thus might have potential to be developed as a biological response modifier for inflammatory diseases (PubMed:25746621).</text>
</comment>
<comment type="miscellaneous">
    <text evidence="11 13 15">Armillaria species are both devastating forest pathogens and some of the largest and oldest terrestrial organisms on Earth (Probable) (PubMed:31746694). They forage for hosts and achieve immense colony sizes via rhizomorphs, root-like multicellular structures of clonal dispersal (Probable). One genetic Armillaria gallica individual localized in Michigan's Upper Peninsula stands out as exceptionally large, covering hundreds of tree root systems over approximately 75 hectares of the forest floor (PubMed:30963893). Based on observed growth rates of the fungus, the minimum age of this large individual can be estimated as 2500 years (PubMed:30963893).</text>
</comment>
<comment type="similarity">
    <text evidence="14">Belongs to the short-chain dehydrogenases/reductases (SDR) family.</text>
</comment>
<name>ARMD4_ARMGA</name>
<evidence type="ECO:0000250" key="1">
    <source>
        <dbReference type="UniProtKB" id="I3ZNU9"/>
    </source>
</evidence>
<evidence type="ECO:0000250" key="2">
    <source>
        <dbReference type="UniProtKB" id="L0E2Z4"/>
    </source>
</evidence>
<evidence type="ECO:0000250" key="3">
    <source>
        <dbReference type="UniProtKB" id="O93868"/>
    </source>
</evidence>
<evidence type="ECO:0000255" key="4">
    <source>
        <dbReference type="PROSITE-ProRule" id="PRU10001"/>
    </source>
</evidence>
<evidence type="ECO:0000269" key="5">
    <source>
    </source>
</evidence>
<evidence type="ECO:0000269" key="6">
    <source>
    </source>
</evidence>
<evidence type="ECO:0000269" key="7">
    <source>
    </source>
</evidence>
<evidence type="ECO:0000269" key="8">
    <source>
    </source>
</evidence>
<evidence type="ECO:0000269" key="9">
    <source>
    </source>
</evidence>
<evidence type="ECO:0000269" key="10">
    <source>
    </source>
</evidence>
<evidence type="ECO:0000269" key="11">
    <source>
    </source>
</evidence>
<evidence type="ECO:0000269" key="12">
    <source>
    </source>
</evidence>
<evidence type="ECO:0000269" key="13">
    <source>
    </source>
</evidence>
<evidence type="ECO:0000305" key="14"/>
<evidence type="ECO:0000305" key="15">
    <source>
    </source>
</evidence>
<sequence>MASTSVSQGRVALVTGAGQGIGRAIALRLASDGFDVALNDLQANEANLVSALAAIEAVGRKGCYIFADVSQETEVEQMISKVVEELGGLDVMVCNAGISLMKSFFDTTAEDFDRITSVNLRGTFLCYKHAGKQMVTQGKGGRIIGACSGTGKKGQPLFSAYAASKFGIRGLTQVAALEFGPHGISVNAFAPGPVKTPMYDHFETIIGTPKGVLEQELNKTAALGRIALPEDVAVVVSFLASKEASLITGQTINVDGGIVFD</sequence>
<accession>A0A2H3D8Y2</accession>
<keyword id="KW-0521">NADP</keyword>
<keyword id="KW-0560">Oxidoreductase</keyword>
<keyword id="KW-1185">Reference proteome</keyword>
<proteinExistence type="evidence at protein level"/>